<organism>
    <name type="scientific">Schizosaccharomyces pombe (strain 972 / ATCC 24843)</name>
    <name type="common">Fission yeast</name>
    <dbReference type="NCBI Taxonomy" id="284812"/>
    <lineage>
        <taxon>Eukaryota</taxon>
        <taxon>Fungi</taxon>
        <taxon>Dikarya</taxon>
        <taxon>Ascomycota</taxon>
        <taxon>Taphrinomycotina</taxon>
        <taxon>Schizosaccharomycetes</taxon>
        <taxon>Schizosaccharomycetales</taxon>
        <taxon>Schizosaccharomycetaceae</taxon>
        <taxon>Schizosaccharomyces</taxon>
    </lineage>
</organism>
<keyword id="KW-0325">Glycoprotein</keyword>
<keyword id="KW-0472">Membrane</keyword>
<keyword id="KW-1185">Reference proteome</keyword>
<keyword id="KW-0762">Sugar transport</keyword>
<keyword id="KW-0812">Transmembrane</keyword>
<keyword id="KW-1133">Transmembrane helix</keyword>
<keyword id="KW-0813">Transport</keyword>
<sequence length="557" mass="62126">MGRTLTSVLVVFISMAGWLGGADTGSISGILGMRDFQSRFADRYNPITNSYSYSAWRQALLTGTVNAGCLFGAMLSSPFTEAIGKKYSIAFFSGCYIIGQILLVTAVPSWVQIMVGKLFTGLTIGALSVLSPGYQSEVAPPQIRGAVVSTYQLFQTCGTLIAACINMGTHKLRKTASWRTSFGINILWGIFLMVGVLFLPESPRYLIYKGRDEEALRIMCQTAELDPESEIIQTNFNTIKSDIEMEMAGGKARWPEVFGKEVRYRTVLGFLTMLLRELIGNNYYFYYATQVFKGTGMTDIFLPAVILGAINFGTTFGALYTIDNLGRRNPLIFGAAFQSICFFIYAAVGDRKLIYKNGTSDHRAGAVMIVFSCLFLFSYCCSWGPMGWVIVGETFPIRYRSKCAAVATSGNWLGNFMVSFFTPFISNSIGFKLGYIYACINMTSAFQIFLMAKETKGLTLEEVNELYESDIKPWDSYKYVRQIESRRIHFSKEEEKREREKSKGYRGQEERFIENADGADNDDSSASSESFASAGAHSRSVFPRRSNVSEESHPTWV</sequence>
<comment type="subcellular location">
    <subcellularLocation>
        <location>Membrane</location>
        <topology>Multi-pass membrane protein</topology>
    </subcellularLocation>
</comment>
<comment type="similarity">
    <text evidence="3">Belongs to the major facilitator superfamily. Sugar transporter (TC 2.A.1.1) family.</text>
</comment>
<feature type="chain" id="PRO_0000050412" description="High-affinity hexose transporter ght4">
    <location>
        <begin position="1"/>
        <end position="557"/>
    </location>
</feature>
<feature type="topological domain" description="Cytoplasmic" evidence="1">
    <location>
        <begin position="1"/>
        <end position="9"/>
    </location>
</feature>
<feature type="transmembrane region" description="Helical; Name=1" evidence="1">
    <location>
        <begin position="10"/>
        <end position="30"/>
    </location>
</feature>
<feature type="topological domain" description="Extracellular" evidence="1">
    <location>
        <begin position="31"/>
        <end position="58"/>
    </location>
</feature>
<feature type="transmembrane region" description="Helical; Name=2" evidence="1">
    <location>
        <begin position="59"/>
        <end position="79"/>
    </location>
</feature>
<feature type="topological domain" description="Cytoplasmic" evidence="1">
    <location>
        <begin position="80"/>
        <end position="87"/>
    </location>
</feature>
<feature type="transmembrane region" description="Helical; Name=3" evidence="1">
    <location>
        <begin position="88"/>
        <end position="108"/>
    </location>
</feature>
<feature type="topological domain" description="Extracellular" evidence="1">
    <location>
        <begin position="109"/>
        <end position="112"/>
    </location>
</feature>
<feature type="transmembrane region" description="Helical; Name=4" evidence="1">
    <location>
        <begin position="113"/>
        <end position="133"/>
    </location>
</feature>
<feature type="topological domain" description="Cytoplasmic" evidence="1">
    <location>
        <begin position="134"/>
        <end position="144"/>
    </location>
</feature>
<feature type="transmembrane region" description="Helical; Name=5" evidence="1">
    <location>
        <begin position="145"/>
        <end position="165"/>
    </location>
</feature>
<feature type="topological domain" description="Extracellular" evidence="1">
    <location>
        <begin position="166"/>
        <end position="179"/>
    </location>
</feature>
<feature type="transmembrane region" description="Helical; Name=6" evidence="1">
    <location>
        <begin position="180"/>
        <end position="200"/>
    </location>
</feature>
<feature type="topological domain" description="Cytoplasmic" evidence="1">
    <location>
        <begin position="201"/>
        <end position="266"/>
    </location>
</feature>
<feature type="transmembrane region" description="Helical; Name=7" evidence="1">
    <location>
        <begin position="267"/>
        <end position="285"/>
    </location>
</feature>
<feature type="topological domain" description="Extracellular" evidence="1">
    <location>
        <begin position="286"/>
        <end position="301"/>
    </location>
</feature>
<feature type="transmembrane region" description="Helical; Name=8" evidence="1">
    <location>
        <begin position="302"/>
        <end position="322"/>
    </location>
</feature>
<feature type="topological domain" description="Cytoplasmic" evidence="1">
    <location>
        <begin position="323"/>
        <end position="328"/>
    </location>
</feature>
<feature type="transmembrane region" description="Helical; Name=9" evidence="1">
    <location>
        <begin position="329"/>
        <end position="349"/>
    </location>
</feature>
<feature type="topological domain" description="Extracellular" evidence="1">
    <location>
        <begin position="350"/>
        <end position="363"/>
    </location>
</feature>
<feature type="transmembrane region" description="Helical; Name=10" evidence="1">
    <location>
        <begin position="364"/>
        <end position="384"/>
    </location>
</feature>
<feature type="topological domain" description="Cytoplasmic" evidence="1">
    <location>
        <begin position="385"/>
        <end position="404"/>
    </location>
</feature>
<feature type="transmembrane region" description="Helical; Name=11" evidence="1">
    <location>
        <begin position="405"/>
        <end position="425"/>
    </location>
</feature>
<feature type="topological domain" description="Extracellular" evidence="1">
    <location>
        <begin position="426"/>
        <end position="432"/>
    </location>
</feature>
<feature type="transmembrane region" description="Helical; Name=12" evidence="1">
    <location>
        <begin position="433"/>
        <end position="453"/>
    </location>
</feature>
<feature type="topological domain" description="Cytoplasmic" evidence="1">
    <location>
        <begin position="454"/>
        <end position="557"/>
    </location>
</feature>
<feature type="region of interest" description="Disordered" evidence="2">
    <location>
        <begin position="492"/>
        <end position="557"/>
    </location>
</feature>
<feature type="compositionally biased region" description="Basic and acidic residues" evidence="2">
    <location>
        <begin position="492"/>
        <end position="514"/>
    </location>
</feature>
<feature type="compositionally biased region" description="Low complexity" evidence="2">
    <location>
        <begin position="524"/>
        <end position="536"/>
    </location>
</feature>
<feature type="compositionally biased region" description="Basic and acidic residues" evidence="2">
    <location>
        <begin position="547"/>
        <end position="557"/>
    </location>
</feature>
<feature type="glycosylation site" description="N-linked (GlcNAc...) asparagine" evidence="1">
    <location>
        <position position="357"/>
    </location>
</feature>
<dbReference type="EMBL" id="AF051140">
    <property type="protein sequence ID" value="AAC63976.1"/>
    <property type="molecule type" value="Genomic_DNA"/>
</dbReference>
<dbReference type="EMBL" id="CU329671">
    <property type="protein sequence ID" value="CAB91170.1"/>
    <property type="molecule type" value="Genomic_DNA"/>
</dbReference>
<dbReference type="PIR" id="T43657">
    <property type="entry name" value="T43657"/>
</dbReference>
<dbReference type="RefSeq" id="NP_595064.1">
    <property type="nucleotide sequence ID" value="NM_001020970.2"/>
</dbReference>
<dbReference type="SMR" id="O59932"/>
<dbReference type="BioGRID" id="276263">
    <property type="interactions" value="7"/>
</dbReference>
<dbReference type="FunCoup" id="O59932">
    <property type="interactions" value="323"/>
</dbReference>
<dbReference type="STRING" id="284812.O59932"/>
<dbReference type="GlyCosmos" id="O59932">
    <property type="glycosylation" value="1 site, No reported glycans"/>
</dbReference>
<dbReference type="iPTMnet" id="O59932"/>
<dbReference type="PaxDb" id="4896-SPBC1683.08.1"/>
<dbReference type="EnsemblFungi" id="SPBC1683.08.1">
    <property type="protein sequence ID" value="SPBC1683.08.1:pep"/>
    <property type="gene ID" value="SPBC1683.08"/>
</dbReference>
<dbReference type="GeneID" id="2539710"/>
<dbReference type="KEGG" id="spo:2539710"/>
<dbReference type="PomBase" id="SPBC1683.08">
    <property type="gene designation" value="ght4"/>
</dbReference>
<dbReference type="VEuPathDB" id="FungiDB:SPBC1683.08"/>
<dbReference type="eggNOG" id="KOG0254">
    <property type="taxonomic scope" value="Eukaryota"/>
</dbReference>
<dbReference type="HOGENOM" id="CLU_001265_30_1_1"/>
<dbReference type="InParanoid" id="O59932"/>
<dbReference type="OMA" id="QTTVSWM"/>
<dbReference type="PhylomeDB" id="O59932"/>
<dbReference type="PRO" id="PR:O59932"/>
<dbReference type="Proteomes" id="UP000002485">
    <property type="component" value="Chromosome II"/>
</dbReference>
<dbReference type="GO" id="GO:0005886">
    <property type="term" value="C:plasma membrane"/>
    <property type="evidence" value="ECO:0000314"/>
    <property type="project" value="PomBase"/>
</dbReference>
<dbReference type="GO" id="GO:0031520">
    <property type="term" value="C:plasma membrane of cell tip"/>
    <property type="evidence" value="ECO:0000314"/>
    <property type="project" value="PomBase"/>
</dbReference>
<dbReference type="GO" id="GO:0005351">
    <property type="term" value="F:carbohydrate:proton symporter activity"/>
    <property type="evidence" value="ECO:0000318"/>
    <property type="project" value="GO_Central"/>
</dbReference>
<dbReference type="GO" id="GO:0008643">
    <property type="term" value="P:carbohydrate transport"/>
    <property type="evidence" value="ECO:0000318"/>
    <property type="project" value="GO_Central"/>
</dbReference>
<dbReference type="CDD" id="cd17356">
    <property type="entry name" value="MFS_HXT"/>
    <property type="match status" value="1"/>
</dbReference>
<dbReference type="FunFam" id="1.20.1250.20:FF:000044">
    <property type="entry name" value="Hexose transporter Hxt3p"/>
    <property type="match status" value="1"/>
</dbReference>
<dbReference type="Gene3D" id="1.20.1250.20">
    <property type="entry name" value="MFS general substrate transporter like domains"/>
    <property type="match status" value="1"/>
</dbReference>
<dbReference type="InterPro" id="IPR020846">
    <property type="entry name" value="MFS_dom"/>
</dbReference>
<dbReference type="InterPro" id="IPR005828">
    <property type="entry name" value="MFS_sugar_transport-like"/>
</dbReference>
<dbReference type="InterPro" id="IPR050360">
    <property type="entry name" value="MFS_Sugar_Transporters"/>
</dbReference>
<dbReference type="InterPro" id="IPR036259">
    <property type="entry name" value="MFS_trans_sf"/>
</dbReference>
<dbReference type="InterPro" id="IPR003663">
    <property type="entry name" value="Sugar/inositol_transpt"/>
</dbReference>
<dbReference type="InterPro" id="IPR005829">
    <property type="entry name" value="Sugar_transporter_CS"/>
</dbReference>
<dbReference type="NCBIfam" id="TIGR00879">
    <property type="entry name" value="SP"/>
    <property type="match status" value="1"/>
</dbReference>
<dbReference type="PANTHER" id="PTHR48022:SF90">
    <property type="entry name" value="HIGH-AFFINITY GLUCONATE TRANSPORTER GHT3-RELATED"/>
    <property type="match status" value="1"/>
</dbReference>
<dbReference type="PANTHER" id="PTHR48022">
    <property type="entry name" value="PLASTIDIC GLUCOSE TRANSPORTER 4"/>
    <property type="match status" value="1"/>
</dbReference>
<dbReference type="Pfam" id="PF00083">
    <property type="entry name" value="Sugar_tr"/>
    <property type="match status" value="1"/>
</dbReference>
<dbReference type="PRINTS" id="PR00171">
    <property type="entry name" value="SUGRTRNSPORT"/>
</dbReference>
<dbReference type="SUPFAM" id="SSF103473">
    <property type="entry name" value="MFS general substrate transporter"/>
    <property type="match status" value="1"/>
</dbReference>
<dbReference type="PROSITE" id="PS50850">
    <property type="entry name" value="MFS"/>
    <property type="match status" value="1"/>
</dbReference>
<dbReference type="PROSITE" id="PS00216">
    <property type="entry name" value="SUGAR_TRANSPORT_1"/>
    <property type="match status" value="1"/>
</dbReference>
<dbReference type="PROSITE" id="PS00217">
    <property type="entry name" value="SUGAR_TRANSPORT_2"/>
    <property type="match status" value="1"/>
</dbReference>
<accession>O59932</accession>
<reference key="1">
    <citation type="journal article" date="2000" name="J. Bacteriol.">
        <title>Multiple hexose transporters of Schizosaccharomyces pombe.</title>
        <authorList>
            <person name="Heiland S."/>
            <person name="Radovanovic N."/>
            <person name="Hoefer M."/>
            <person name="Winderickx J."/>
            <person name="Lichtenberg H."/>
        </authorList>
    </citation>
    <scope>NUCLEOTIDE SEQUENCE [GENOMIC DNA]</scope>
    <source>
        <strain>972 / ATCC 24843</strain>
    </source>
</reference>
<reference key="2">
    <citation type="journal article" date="2002" name="Nature">
        <title>The genome sequence of Schizosaccharomyces pombe.</title>
        <authorList>
            <person name="Wood V."/>
            <person name="Gwilliam R."/>
            <person name="Rajandream M.A."/>
            <person name="Lyne M.H."/>
            <person name="Lyne R."/>
            <person name="Stewart A."/>
            <person name="Sgouros J.G."/>
            <person name="Peat N."/>
            <person name="Hayles J."/>
            <person name="Baker S.G."/>
            <person name="Basham D."/>
            <person name="Bowman S."/>
            <person name="Brooks K."/>
            <person name="Brown D."/>
            <person name="Brown S."/>
            <person name="Chillingworth T."/>
            <person name="Churcher C.M."/>
            <person name="Collins M."/>
            <person name="Connor R."/>
            <person name="Cronin A."/>
            <person name="Davis P."/>
            <person name="Feltwell T."/>
            <person name="Fraser A."/>
            <person name="Gentles S."/>
            <person name="Goble A."/>
            <person name="Hamlin N."/>
            <person name="Harris D.E."/>
            <person name="Hidalgo J."/>
            <person name="Hodgson G."/>
            <person name="Holroyd S."/>
            <person name="Hornsby T."/>
            <person name="Howarth S."/>
            <person name="Huckle E.J."/>
            <person name="Hunt S."/>
            <person name="Jagels K."/>
            <person name="James K.D."/>
            <person name="Jones L."/>
            <person name="Jones M."/>
            <person name="Leather S."/>
            <person name="McDonald S."/>
            <person name="McLean J."/>
            <person name="Mooney P."/>
            <person name="Moule S."/>
            <person name="Mungall K.L."/>
            <person name="Murphy L.D."/>
            <person name="Niblett D."/>
            <person name="Odell C."/>
            <person name="Oliver K."/>
            <person name="O'Neil S."/>
            <person name="Pearson D."/>
            <person name="Quail M.A."/>
            <person name="Rabbinowitsch E."/>
            <person name="Rutherford K.M."/>
            <person name="Rutter S."/>
            <person name="Saunders D."/>
            <person name="Seeger K."/>
            <person name="Sharp S."/>
            <person name="Skelton J."/>
            <person name="Simmonds M.N."/>
            <person name="Squares R."/>
            <person name="Squares S."/>
            <person name="Stevens K."/>
            <person name="Taylor K."/>
            <person name="Taylor R.G."/>
            <person name="Tivey A."/>
            <person name="Walsh S.V."/>
            <person name="Warren T."/>
            <person name="Whitehead S."/>
            <person name="Woodward J.R."/>
            <person name="Volckaert G."/>
            <person name="Aert R."/>
            <person name="Robben J."/>
            <person name="Grymonprez B."/>
            <person name="Weltjens I."/>
            <person name="Vanstreels E."/>
            <person name="Rieger M."/>
            <person name="Schaefer M."/>
            <person name="Mueller-Auer S."/>
            <person name="Gabel C."/>
            <person name="Fuchs M."/>
            <person name="Duesterhoeft A."/>
            <person name="Fritzc C."/>
            <person name="Holzer E."/>
            <person name="Moestl D."/>
            <person name="Hilbert H."/>
            <person name="Borzym K."/>
            <person name="Langer I."/>
            <person name="Beck A."/>
            <person name="Lehrach H."/>
            <person name="Reinhardt R."/>
            <person name="Pohl T.M."/>
            <person name="Eger P."/>
            <person name="Zimmermann W."/>
            <person name="Wedler H."/>
            <person name="Wambutt R."/>
            <person name="Purnelle B."/>
            <person name="Goffeau A."/>
            <person name="Cadieu E."/>
            <person name="Dreano S."/>
            <person name="Gloux S."/>
            <person name="Lelaure V."/>
            <person name="Mottier S."/>
            <person name="Galibert F."/>
            <person name="Aves S.J."/>
            <person name="Xiang Z."/>
            <person name="Hunt C."/>
            <person name="Moore K."/>
            <person name="Hurst S.M."/>
            <person name="Lucas M."/>
            <person name="Rochet M."/>
            <person name="Gaillardin C."/>
            <person name="Tallada V.A."/>
            <person name="Garzon A."/>
            <person name="Thode G."/>
            <person name="Daga R.R."/>
            <person name="Cruzado L."/>
            <person name="Jimenez J."/>
            <person name="Sanchez M."/>
            <person name="del Rey F."/>
            <person name="Benito J."/>
            <person name="Dominguez A."/>
            <person name="Revuelta J.L."/>
            <person name="Moreno S."/>
            <person name="Armstrong J."/>
            <person name="Forsburg S.L."/>
            <person name="Cerutti L."/>
            <person name="Lowe T."/>
            <person name="McCombie W.R."/>
            <person name="Paulsen I."/>
            <person name="Potashkin J."/>
            <person name="Shpakovski G.V."/>
            <person name="Ussery D."/>
            <person name="Barrell B.G."/>
            <person name="Nurse P."/>
        </authorList>
    </citation>
    <scope>NUCLEOTIDE SEQUENCE [LARGE SCALE GENOMIC DNA]</scope>
    <source>
        <strain>972 / ATCC 24843</strain>
    </source>
</reference>
<protein>
    <recommendedName>
        <fullName>High-affinity hexose transporter ght4</fullName>
        <shortName>Hexose transporter 4</shortName>
    </recommendedName>
</protein>
<gene>
    <name type="primary">ght4</name>
    <name type="ORF">SPBC1683.08</name>
</gene>
<name>GHT4_SCHPO</name>
<proteinExistence type="inferred from homology"/>
<evidence type="ECO:0000255" key="1"/>
<evidence type="ECO:0000256" key="2">
    <source>
        <dbReference type="SAM" id="MobiDB-lite"/>
    </source>
</evidence>
<evidence type="ECO:0000305" key="3"/>